<reference key="1">
    <citation type="journal article" date="1986" name="J. Gen. Virol.">
        <title>The complete DNA sequence of varicella-zoster virus.</title>
        <authorList>
            <person name="Davison A.J."/>
            <person name="Scott J.E."/>
        </authorList>
    </citation>
    <scope>NUCLEOTIDE SEQUENCE [LARGE SCALE GENOMIC DNA]</scope>
</reference>
<dbReference type="EMBL" id="X04370">
    <property type="protein sequence ID" value="CAA27926.1"/>
    <property type="molecule type" value="Genomic_DNA"/>
</dbReference>
<dbReference type="PIR" id="H27341">
    <property type="entry name" value="WZBE43"/>
</dbReference>
<dbReference type="SMR" id="P09292"/>
<dbReference type="Proteomes" id="UP000002602">
    <property type="component" value="Genome"/>
</dbReference>
<dbReference type="GO" id="GO:0042025">
    <property type="term" value="C:host cell nucleus"/>
    <property type="evidence" value="ECO:0007669"/>
    <property type="project" value="UniProtKB-SubCell"/>
</dbReference>
<dbReference type="GO" id="GO:0019028">
    <property type="term" value="C:viral capsid"/>
    <property type="evidence" value="ECO:0007669"/>
    <property type="project" value="UniProtKB-KW"/>
</dbReference>
<dbReference type="GO" id="GO:0051276">
    <property type="term" value="P:chromosome organization"/>
    <property type="evidence" value="ECO:0007669"/>
    <property type="project" value="InterPro"/>
</dbReference>
<dbReference type="HAMAP" id="MF_04017">
    <property type="entry name" value="HSV_CVC1"/>
    <property type="match status" value="1"/>
</dbReference>
<dbReference type="InterPro" id="IPR007640">
    <property type="entry name" value="UL17-like"/>
</dbReference>
<dbReference type="Pfam" id="PF04559">
    <property type="entry name" value="Herpes_UL17"/>
    <property type="match status" value="1"/>
</dbReference>
<protein>
    <recommendedName>
        <fullName evidence="1">Capsid vertex component 1</fullName>
    </recommendedName>
</protein>
<evidence type="ECO:0000255" key="1">
    <source>
        <dbReference type="HAMAP-Rule" id="MF_04017"/>
    </source>
</evidence>
<evidence type="ECO:0000256" key="2">
    <source>
        <dbReference type="SAM" id="MobiDB-lite"/>
    </source>
</evidence>
<feature type="chain" id="PRO_0000115962" description="Capsid vertex component 1">
    <location>
        <begin position="1"/>
        <end position="676"/>
    </location>
</feature>
<feature type="region of interest" description="Disordered" evidence="2">
    <location>
        <begin position="253"/>
        <end position="308"/>
    </location>
</feature>
<feature type="compositionally biased region" description="Low complexity" evidence="2">
    <location>
        <begin position="253"/>
        <end position="264"/>
    </location>
</feature>
<feature type="compositionally biased region" description="Polar residues" evidence="2">
    <location>
        <begin position="275"/>
        <end position="287"/>
    </location>
</feature>
<organism>
    <name type="scientific">Varicella-zoster virus (strain Dumas)</name>
    <name type="common">HHV-3</name>
    <name type="synonym">Human herpesvirus 3</name>
    <dbReference type="NCBI Taxonomy" id="10338"/>
    <lineage>
        <taxon>Viruses</taxon>
        <taxon>Duplodnaviria</taxon>
        <taxon>Heunggongvirae</taxon>
        <taxon>Peploviricota</taxon>
        <taxon>Herviviricetes</taxon>
        <taxon>Herpesvirales</taxon>
        <taxon>Orthoherpesviridae</taxon>
        <taxon>Alphaherpesvirinae</taxon>
        <taxon>Varicellovirus</taxon>
        <taxon>Varicellovirus humanalpha3</taxon>
        <taxon>Human herpesvirus 3</taxon>
    </lineage>
</organism>
<sequence>MEAHLANETKHALWHNDHTKGLLHVVIPNAGLIAAGIDPALLILKKPGQRFKVEVQTRYHATGQCEPWCQVFAAYIPDNALTNLLIPKTEPFVSHVFSATHNSGGLILSLPVYLSPGLFFDAFNVVAIRINTGNRKHRDICIMYAELIPNGTRYFADGQRVLLLCKQLIAYIRCTPRLASSIKIYAEHMVAAMGESHTSNGDNIGPVSSIIDLDRQLTSGGIDDSPAETRIQENNRDVLELIKRAVNIVNSRHPVRPSSSRVASGLLQSAKGHGAQTSNTDPINNGSFDGVLEPPGQGRFTGKKNNSSASIPPLQDVLLFTPASTEPQSLMEWFDICYAQLVSGDTPADFWKRRPLSIVPRHYAESPSPLIVVSYNGSSAWGGRITGSPILYHSAQAIIDAACINARVDNPQSLHVTARQELVARLPFLANVLNNQTPLPAFKPGAEMFLNQVFKQACVTSLTQGLITELQTNPTLQQLMEYDIADSSQTVIDEIVARTPDLIQTIVSVLTEMSMDAFYNSSLMYAVLAYLSSVYTRPQGGGYIPYLHASFPCWLGNRSIYLFDYYNSGGEILKLSKVPVPVALEKVGIGNSTQLRGKFIRSADIVDIGICSKYLPGQCYAYICLGFNQQLQSILVLPGGFAACFCITDTLQAALPASLIGPILDRFCFSIPNPHK</sequence>
<proteinExistence type="inferred from homology"/>
<accession>P09292</accession>
<keyword id="KW-0167">Capsid protein</keyword>
<keyword id="KW-1048">Host nucleus</keyword>
<keyword id="KW-0426">Late protein</keyword>
<keyword id="KW-1185">Reference proteome</keyword>
<keyword id="KW-0231">Viral genome packaging</keyword>
<keyword id="KW-1188">Viral release from host cell</keyword>
<keyword id="KW-0946">Virion</keyword>
<comment type="function">
    <text evidence="1">Capsid vertex-specific component that plays a role during viral DNA encapsidation, assuring correct genome cleavage and presumably stabilizing capsids that contain full-length viral genomes.</text>
</comment>
<comment type="subunit">
    <text evidence="1">Interacts (via C-terminus) with capsid vertex component 2/CVC2.</text>
</comment>
<comment type="subcellular location">
    <subcellularLocation>
        <location evidence="1">Virion</location>
    </subcellularLocation>
    <subcellularLocation>
        <location evidence="1">Host nucleus</location>
    </subcellularLocation>
</comment>
<comment type="similarity">
    <text evidence="1">Belongs to the herpesviridae CVC1 protein family.</text>
</comment>
<organismHost>
    <name type="scientific">Homo sapiens</name>
    <name type="common">Human</name>
    <dbReference type="NCBI Taxonomy" id="9606"/>
</organismHost>
<gene>
    <name evidence="1" type="primary">CVC1</name>
    <name type="ordered locus">43</name>
</gene>
<name>CVC1_VZVD</name>